<feature type="chain" id="PRO_0000161256" description="Fumarate hydratase class II">
    <location>
        <begin position="1"/>
        <end position="463"/>
    </location>
</feature>
<feature type="region of interest" description="Disordered" evidence="2">
    <location>
        <begin position="121"/>
        <end position="142"/>
    </location>
</feature>
<feature type="compositionally biased region" description="Basic and acidic residues" evidence="2">
    <location>
        <begin position="121"/>
        <end position="134"/>
    </location>
</feature>
<feature type="active site" description="Proton donor/acceptor" evidence="1">
    <location>
        <position position="187"/>
    </location>
</feature>
<feature type="active site" evidence="1">
    <location>
        <position position="317"/>
    </location>
</feature>
<feature type="binding site" evidence="1">
    <location>
        <begin position="97"/>
        <end position="99"/>
    </location>
    <ligand>
        <name>substrate</name>
    </ligand>
</feature>
<feature type="binding site" evidence="1">
    <location>
        <position position="125"/>
    </location>
    <ligand>
        <name>substrate</name>
    </ligand>
</feature>
<feature type="binding site" description="in site B" evidence="1">
    <location>
        <begin position="128"/>
        <end position="131"/>
    </location>
    <ligand>
        <name>substrate</name>
    </ligand>
</feature>
<feature type="binding site" evidence="1">
    <location>
        <begin position="138"/>
        <end position="140"/>
    </location>
    <ligand>
        <name>substrate</name>
    </ligand>
</feature>
<feature type="binding site" evidence="1">
    <location>
        <position position="186"/>
    </location>
    <ligand>
        <name>substrate</name>
    </ligand>
</feature>
<feature type="binding site" evidence="1">
    <location>
        <position position="318"/>
    </location>
    <ligand>
        <name>substrate</name>
    </ligand>
</feature>
<feature type="binding site" evidence="1">
    <location>
        <begin position="323"/>
        <end position="325"/>
    </location>
    <ligand>
        <name>substrate</name>
    </ligand>
</feature>
<feature type="site" description="Important for catalytic activity" evidence="1">
    <location>
        <position position="330"/>
    </location>
</feature>
<dbReference type="EC" id="4.2.1.2" evidence="1"/>
<dbReference type="EMBL" id="BX640449">
    <property type="protein sequence ID" value="CAE34417.1"/>
    <property type="molecule type" value="Genomic_DNA"/>
</dbReference>
<dbReference type="RefSeq" id="WP_003814327.1">
    <property type="nucleotide sequence ID" value="NC_002927.3"/>
</dbReference>
<dbReference type="SMR" id="Q7WG65"/>
<dbReference type="GeneID" id="93205407"/>
<dbReference type="KEGG" id="bbr:BB4054"/>
<dbReference type="eggNOG" id="COG0114">
    <property type="taxonomic scope" value="Bacteria"/>
</dbReference>
<dbReference type="HOGENOM" id="CLU_021594_4_1_4"/>
<dbReference type="UniPathway" id="UPA00223">
    <property type="reaction ID" value="UER01007"/>
</dbReference>
<dbReference type="Proteomes" id="UP000001027">
    <property type="component" value="Chromosome"/>
</dbReference>
<dbReference type="GO" id="GO:0005737">
    <property type="term" value="C:cytoplasm"/>
    <property type="evidence" value="ECO:0007669"/>
    <property type="project" value="UniProtKB-SubCell"/>
</dbReference>
<dbReference type="GO" id="GO:0004333">
    <property type="term" value="F:fumarate hydratase activity"/>
    <property type="evidence" value="ECO:0007669"/>
    <property type="project" value="UniProtKB-UniRule"/>
</dbReference>
<dbReference type="GO" id="GO:0006106">
    <property type="term" value="P:fumarate metabolic process"/>
    <property type="evidence" value="ECO:0007669"/>
    <property type="project" value="InterPro"/>
</dbReference>
<dbReference type="GO" id="GO:0006108">
    <property type="term" value="P:malate metabolic process"/>
    <property type="evidence" value="ECO:0007669"/>
    <property type="project" value="TreeGrafter"/>
</dbReference>
<dbReference type="GO" id="GO:0006099">
    <property type="term" value="P:tricarboxylic acid cycle"/>
    <property type="evidence" value="ECO:0007669"/>
    <property type="project" value="UniProtKB-UniRule"/>
</dbReference>
<dbReference type="CDD" id="cd01362">
    <property type="entry name" value="Fumarase_classII"/>
    <property type="match status" value="1"/>
</dbReference>
<dbReference type="FunFam" id="1.10.40.30:FF:000002">
    <property type="entry name" value="Fumarate hydratase class II"/>
    <property type="match status" value="1"/>
</dbReference>
<dbReference type="FunFam" id="1.10.275.10:FF:000001">
    <property type="entry name" value="Fumarate hydratase, mitochondrial"/>
    <property type="match status" value="1"/>
</dbReference>
<dbReference type="FunFam" id="1.20.200.10:FF:000001">
    <property type="entry name" value="Fumarate hydratase, mitochondrial"/>
    <property type="match status" value="1"/>
</dbReference>
<dbReference type="Gene3D" id="1.10.40.30">
    <property type="entry name" value="Fumarase/aspartase (C-terminal domain)"/>
    <property type="match status" value="1"/>
</dbReference>
<dbReference type="Gene3D" id="1.20.200.10">
    <property type="entry name" value="Fumarase/aspartase (Central domain)"/>
    <property type="match status" value="1"/>
</dbReference>
<dbReference type="Gene3D" id="1.10.275.10">
    <property type="entry name" value="Fumarase/aspartase (N-terminal domain)"/>
    <property type="match status" value="1"/>
</dbReference>
<dbReference type="HAMAP" id="MF_00743">
    <property type="entry name" value="FumaraseC"/>
    <property type="match status" value="1"/>
</dbReference>
<dbReference type="InterPro" id="IPR005677">
    <property type="entry name" value="Fum_hydII"/>
</dbReference>
<dbReference type="InterPro" id="IPR024083">
    <property type="entry name" value="Fumarase/histidase_N"/>
</dbReference>
<dbReference type="InterPro" id="IPR018951">
    <property type="entry name" value="Fumarase_C_C"/>
</dbReference>
<dbReference type="InterPro" id="IPR020557">
    <property type="entry name" value="Fumarate_lyase_CS"/>
</dbReference>
<dbReference type="InterPro" id="IPR000362">
    <property type="entry name" value="Fumarate_lyase_fam"/>
</dbReference>
<dbReference type="InterPro" id="IPR022761">
    <property type="entry name" value="Fumarate_lyase_N"/>
</dbReference>
<dbReference type="InterPro" id="IPR008948">
    <property type="entry name" value="L-Aspartase-like"/>
</dbReference>
<dbReference type="NCBIfam" id="TIGR00979">
    <property type="entry name" value="fumC_II"/>
    <property type="match status" value="1"/>
</dbReference>
<dbReference type="NCBIfam" id="NF008909">
    <property type="entry name" value="PRK12273.1"/>
    <property type="match status" value="1"/>
</dbReference>
<dbReference type="PANTHER" id="PTHR11444">
    <property type="entry name" value="ASPARTATEAMMONIA/ARGININOSUCCINATE/ADENYLOSUCCINATE LYASE"/>
    <property type="match status" value="1"/>
</dbReference>
<dbReference type="PANTHER" id="PTHR11444:SF1">
    <property type="entry name" value="FUMARATE HYDRATASE, MITOCHONDRIAL"/>
    <property type="match status" value="1"/>
</dbReference>
<dbReference type="Pfam" id="PF10415">
    <property type="entry name" value="FumaraseC_C"/>
    <property type="match status" value="1"/>
</dbReference>
<dbReference type="Pfam" id="PF00206">
    <property type="entry name" value="Lyase_1"/>
    <property type="match status" value="1"/>
</dbReference>
<dbReference type="PRINTS" id="PR00145">
    <property type="entry name" value="ARGSUCLYASE"/>
</dbReference>
<dbReference type="PRINTS" id="PR00149">
    <property type="entry name" value="FUMRATELYASE"/>
</dbReference>
<dbReference type="SUPFAM" id="SSF48557">
    <property type="entry name" value="L-aspartase-like"/>
    <property type="match status" value="1"/>
</dbReference>
<dbReference type="PROSITE" id="PS00163">
    <property type="entry name" value="FUMARATE_LYASES"/>
    <property type="match status" value="1"/>
</dbReference>
<accession>Q7WG65</accession>
<protein>
    <recommendedName>
        <fullName evidence="1">Fumarate hydratase class II</fullName>
        <shortName evidence="1">Fumarase C</shortName>
        <ecNumber evidence="1">4.2.1.2</ecNumber>
    </recommendedName>
    <alternativeName>
        <fullName evidence="1">Aerobic fumarase</fullName>
    </alternativeName>
    <alternativeName>
        <fullName evidence="1">Iron-independent fumarase</fullName>
    </alternativeName>
</protein>
<proteinExistence type="inferred from homology"/>
<keyword id="KW-0963">Cytoplasm</keyword>
<keyword id="KW-0456">Lyase</keyword>
<keyword id="KW-0816">Tricarboxylic acid cycle</keyword>
<comment type="function">
    <text evidence="1">Involved in the TCA cycle. Catalyzes the stereospecific interconversion of fumarate to L-malate.</text>
</comment>
<comment type="catalytic activity">
    <reaction evidence="1">
        <text>(S)-malate = fumarate + H2O</text>
        <dbReference type="Rhea" id="RHEA:12460"/>
        <dbReference type="ChEBI" id="CHEBI:15377"/>
        <dbReference type="ChEBI" id="CHEBI:15589"/>
        <dbReference type="ChEBI" id="CHEBI:29806"/>
        <dbReference type="EC" id="4.2.1.2"/>
    </reaction>
</comment>
<comment type="pathway">
    <text evidence="1">Carbohydrate metabolism; tricarboxylic acid cycle; (S)-malate from fumarate: step 1/1.</text>
</comment>
<comment type="subunit">
    <text evidence="1">Homotetramer.</text>
</comment>
<comment type="subcellular location">
    <subcellularLocation>
        <location evidence="1">Cytoplasm</location>
    </subcellularLocation>
</comment>
<comment type="miscellaneous">
    <text evidence="1">There are 2 substrate-binding sites: the catalytic A site, and the non-catalytic B site that may play a role in the transfer of substrate or product between the active site and the solvent. Alternatively, the B site may bind allosteric effectors.</text>
</comment>
<comment type="similarity">
    <text evidence="1">Belongs to the class-II fumarase/aspartase family. Fumarase subfamily.</text>
</comment>
<name>FUMC_BORBR</name>
<gene>
    <name evidence="1" type="primary">fumC</name>
    <name type="ordered locus">BB4054</name>
</gene>
<evidence type="ECO:0000255" key="1">
    <source>
        <dbReference type="HAMAP-Rule" id="MF_00743"/>
    </source>
</evidence>
<evidence type="ECO:0000256" key="2">
    <source>
        <dbReference type="SAM" id="MobiDB-lite"/>
    </source>
</evidence>
<organism>
    <name type="scientific">Bordetella bronchiseptica (strain ATCC BAA-588 / NCTC 13252 / RB50)</name>
    <name type="common">Alcaligenes bronchisepticus</name>
    <dbReference type="NCBI Taxonomy" id="257310"/>
    <lineage>
        <taxon>Bacteria</taxon>
        <taxon>Pseudomonadati</taxon>
        <taxon>Pseudomonadota</taxon>
        <taxon>Betaproteobacteria</taxon>
        <taxon>Burkholderiales</taxon>
        <taxon>Alcaligenaceae</taxon>
        <taxon>Bordetella</taxon>
    </lineage>
</organism>
<reference key="1">
    <citation type="journal article" date="2003" name="Nat. Genet.">
        <title>Comparative analysis of the genome sequences of Bordetella pertussis, Bordetella parapertussis and Bordetella bronchiseptica.</title>
        <authorList>
            <person name="Parkhill J."/>
            <person name="Sebaihia M."/>
            <person name="Preston A."/>
            <person name="Murphy L.D."/>
            <person name="Thomson N.R."/>
            <person name="Harris D.E."/>
            <person name="Holden M.T.G."/>
            <person name="Churcher C.M."/>
            <person name="Bentley S.D."/>
            <person name="Mungall K.L."/>
            <person name="Cerdeno-Tarraga A.-M."/>
            <person name="Temple L."/>
            <person name="James K.D."/>
            <person name="Harris B."/>
            <person name="Quail M.A."/>
            <person name="Achtman M."/>
            <person name="Atkin R."/>
            <person name="Baker S."/>
            <person name="Basham D."/>
            <person name="Bason N."/>
            <person name="Cherevach I."/>
            <person name="Chillingworth T."/>
            <person name="Collins M."/>
            <person name="Cronin A."/>
            <person name="Davis P."/>
            <person name="Doggett J."/>
            <person name="Feltwell T."/>
            <person name="Goble A."/>
            <person name="Hamlin N."/>
            <person name="Hauser H."/>
            <person name="Holroyd S."/>
            <person name="Jagels K."/>
            <person name="Leather S."/>
            <person name="Moule S."/>
            <person name="Norberczak H."/>
            <person name="O'Neil S."/>
            <person name="Ormond D."/>
            <person name="Price C."/>
            <person name="Rabbinowitsch E."/>
            <person name="Rutter S."/>
            <person name="Sanders M."/>
            <person name="Saunders D."/>
            <person name="Seeger K."/>
            <person name="Sharp S."/>
            <person name="Simmonds M."/>
            <person name="Skelton J."/>
            <person name="Squares R."/>
            <person name="Squares S."/>
            <person name="Stevens K."/>
            <person name="Unwin L."/>
            <person name="Whitehead S."/>
            <person name="Barrell B.G."/>
            <person name="Maskell D.J."/>
        </authorList>
    </citation>
    <scope>NUCLEOTIDE SEQUENCE [LARGE SCALE GENOMIC DNA]</scope>
    <source>
        <strain>ATCC BAA-588 / NCTC 13252 / RB50</strain>
    </source>
</reference>
<sequence>MKTRTEKDTFGPIEVPEQHLWGAQTQRSLHFFAISTEKMPVPLVAAMARLKRAAAKVNAELGELDPQVADAIMRAADEVVAGKWPDEFPLSVWQTGSGTQSNMNMNEVLANRASELLGGERGEGRKVHPNDHVNRGQSSNDTFPTAMHVAAAVEVEHRVLPALKALRGTLAAKSAAFYDIVKIGRTHLQDATPLTLGQEISGYVAQLDLAEQQIRATLAGLHQLAIGGTAVGTGLNAHPQFSAKVSAELAHDTGSAFVSAPNKFQALASHEALLFAHGALKTLAAGLMKIANDVRWLASGPRSGLGEISIPENEPGSSIMPGKVNPTQCEAVTMLAAQVMGNDVAINVGGASGNFELNVFKPLVIHNFLQSVRLLADGMVSFDKHCAAGIEPNRERITELVERSLMLVTALNPHIGYDKAAQIAKKAHKENLSLKEAALALGHLTEAQFAEWVVPGDMTNARR</sequence>